<name>ADAB_BACSU</name>
<accession>P19220</accession>
<gene>
    <name type="primary">adaB</name>
    <name type="ordered locus">BSU01820</name>
</gene>
<sequence length="179" mass="20124">METNKPTLYWSLLMFKDWNFYIASTLKGLVFVGSQNKPIEELFEWARKRFPGSLLVEDDDKLEPYAVEITQYLEGKRKNFTVPVEYAGTQFQLAVWNALCEIPYGQTKSYSDIANDINKPAAVRAVGAAIGANPVLITVPCHRVIGKNGSLTGYRGGFEMKTLLLDLEKRASSEMDVPH</sequence>
<keyword id="KW-0227">DNA damage</keyword>
<keyword id="KW-0234">DNA repair</keyword>
<keyword id="KW-0489">Methyltransferase</keyword>
<keyword id="KW-1185">Reference proteome</keyword>
<keyword id="KW-0808">Transferase</keyword>
<reference key="1">
    <citation type="journal article" date="1990" name="Nucleic Acids Res.">
        <title>Bacillus subtilis ada operon encodes two DNA alkyltransferases.</title>
        <authorList>
            <person name="Morohoshi F."/>
            <person name="Hayashi K."/>
            <person name="Munakata N."/>
        </authorList>
    </citation>
    <scope>NUCLEOTIDE SEQUENCE [GENOMIC DNA]</scope>
    <scope>FUNCTION</scope>
    <scope>ROLE IN RESISTANCE TO ALKYLATION DAMAGE</scope>
    <scope>INDUCTION</scope>
    <source>
        <strain>168</strain>
    </source>
</reference>
<reference key="2">
    <citation type="submission" date="1997-07" db="EMBL/GenBank/DDBJ databases">
        <title>Sequence analysis of the 70kb region between 17 and 23 degree of the Bacillus subtilis chromosome.</title>
        <authorList>
            <person name="Haga K."/>
            <person name="Liu H."/>
            <person name="Yasumoto K."/>
            <person name="Takahashi H."/>
            <person name="Yoshikawa H."/>
        </authorList>
    </citation>
    <scope>NUCLEOTIDE SEQUENCE [GENOMIC DNA]</scope>
    <source>
        <strain>168</strain>
    </source>
</reference>
<reference key="3">
    <citation type="journal article" date="1997" name="Nature">
        <title>The complete genome sequence of the Gram-positive bacterium Bacillus subtilis.</title>
        <authorList>
            <person name="Kunst F."/>
            <person name="Ogasawara N."/>
            <person name="Moszer I."/>
            <person name="Albertini A.M."/>
            <person name="Alloni G."/>
            <person name="Azevedo V."/>
            <person name="Bertero M.G."/>
            <person name="Bessieres P."/>
            <person name="Bolotin A."/>
            <person name="Borchert S."/>
            <person name="Borriss R."/>
            <person name="Boursier L."/>
            <person name="Brans A."/>
            <person name="Braun M."/>
            <person name="Brignell S.C."/>
            <person name="Bron S."/>
            <person name="Brouillet S."/>
            <person name="Bruschi C.V."/>
            <person name="Caldwell B."/>
            <person name="Capuano V."/>
            <person name="Carter N.M."/>
            <person name="Choi S.-K."/>
            <person name="Codani J.-J."/>
            <person name="Connerton I.F."/>
            <person name="Cummings N.J."/>
            <person name="Daniel R.A."/>
            <person name="Denizot F."/>
            <person name="Devine K.M."/>
            <person name="Duesterhoeft A."/>
            <person name="Ehrlich S.D."/>
            <person name="Emmerson P.T."/>
            <person name="Entian K.-D."/>
            <person name="Errington J."/>
            <person name="Fabret C."/>
            <person name="Ferrari E."/>
            <person name="Foulger D."/>
            <person name="Fritz C."/>
            <person name="Fujita M."/>
            <person name="Fujita Y."/>
            <person name="Fuma S."/>
            <person name="Galizzi A."/>
            <person name="Galleron N."/>
            <person name="Ghim S.-Y."/>
            <person name="Glaser P."/>
            <person name="Goffeau A."/>
            <person name="Golightly E.J."/>
            <person name="Grandi G."/>
            <person name="Guiseppi G."/>
            <person name="Guy B.J."/>
            <person name="Haga K."/>
            <person name="Haiech J."/>
            <person name="Harwood C.R."/>
            <person name="Henaut A."/>
            <person name="Hilbert H."/>
            <person name="Holsappel S."/>
            <person name="Hosono S."/>
            <person name="Hullo M.-F."/>
            <person name="Itaya M."/>
            <person name="Jones L.-M."/>
            <person name="Joris B."/>
            <person name="Karamata D."/>
            <person name="Kasahara Y."/>
            <person name="Klaerr-Blanchard M."/>
            <person name="Klein C."/>
            <person name="Kobayashi Y."/>
            <person name="Koetter P."/>
            <person name="Koningstein G."/>
            <person name="Krogh S."/>
            <person name="Kumano M."/>
            <person name="Kurita K."/>
            <person name="Lapidus A."/>
            <person name="Lardinois S."/>
            <person name="Lauber J."/>
            <person name="Lazarevic V."/>
            <person name="Lee S.-M."/>
            <person name="Levine A."/>
            <person name="Liu H."/>
            <person name="Masuda S."/>
            <person name="Mauel C."/>
            <person name="Medigue C."/>
            <person name="Medina N."/>
            <person name="Mellado R.P."/>
            <person name="Mizuno M."/>
            <person name="Moestl D."/>
            <person name="Nakai S."/>
            <person name="Noback M."/>
            <person name="Noone D."/>
            <person name="O'Reilly M."/>
            <person name="Ogawa K."/>
            <person name="Ogiwara A."/>
            <person name="Oudega B."/>
            <person name="Park S.-H."/>
            <person name="Parro V."/>
            <person name="Pohl T.M."/>
            <person name="Portetelle D."/>
            <person name="Porwollik S."/>
            <person name="Prescott A.M."/>
            <person name="Presecan E."/>
            <person name="Pujic P."/>
            <person name="Purnelle B."/>
            <person name="Rapoport G."/>
            <person name="Rey M."/>
            <person name="Reynolds S."/>
            <person name="Rieger M."/>
            <person name="Rivolta C."/>
            <person name="Rocha E."/>
            <person name="Roche B."/>
            <person name="Rose M."/>
            <person name="Sadaie Y."/>
            <person name="Sato T."/>
            <person name="Scanlan E."/>
            <person name="Schleich S."/>
            <person name="Schroeter R."/>
            <person name="Scoffone F."/>
            <person name="Sekiguchi J."/>
            <person name="Sekowska A."/>
            <person name="Seror S.J."/>
            <person name="Serror P."/>
            <person name="Shin B.-S."/>
            <person name="Soldo B."/>
            <person name="Sorokin A."/>
            <person name="Tacconi E."/>
            <person name="Takagi T."/>
            <person name="Takahashi H."/>
            <person name="Takemaru K."/>
            <person name="Takeuchi M."/>
            <person name="Tamakoshi A."/>
            <person name="Tanaka T."/>
            <person name="Terpstra P."/>
            <person name="Tognoni A."/>
            <person name="Tosato V."/>
            <person name="Uchiyama S."/>
            <person name="Vandenbol M."/>
            <person name="Vannier F."/>
            <person name="Vassarotti A."/>
            <person name="Viari A."/>
            <person name="Wambutt R."/>
            <person name="Wedler E."/>
            <person name="Wedler H."/>
            <person name="Weitzenegger T."/>
            <person name="Winters P."/>
            <person name="Wipat A."/>
            <person name="Yamamoto H."/>
            <person name="Yamane K."/>
            <person name="Yasumoto K."/>
            <person name="Yata K."/>
            <person name="Yoshida K."/>
            <person name="Yoshikawa H.-F."/>
            <person name="Zumstein E."/>
            <person name="Yoshikawa H."/>
            <person name="Danchin A."/>
        </authorList>
    </citation>
    <scope>NUCLEOTIDE SEQUENCE [LARGE SCALE GENOMIC DNA]</scope>
    <source>
        <strain>168</strain>
    </source>
</reference>
<reference key="4">
    <citation type="journal article" date="1987" name="J. Bacteriol.">
        <title>Multiple species of Bacillus subtilis DNA alkyltransferase involved in the adaptive response to simple alkylating agents.</title>
        <authorList>
            <person name="Morohoshi F."/>
            <person name="Munakata N."/>
        </authorList>
    </citation>
    <scope>FUNCTION</scope>
    <scope>CATALYTIC ACTIVITY</scope>
    <source>
        <strain>168</strain>
    </source>
</reference>
<reference key="5">
    <citation type="journal article" date="1991" name="J. Bacteriol.">
        <title>Molecular analysis of Bacillus subtilis ada mutants deficient in the adaptive response to simple alkylating agents.</title>
        <authorList>
            <person name="Morohoshi F."/>
            <person name="Hayashi K."/>
            <person name="Munakata N."/>
        </authorList>
    </citation>
    <scope>MUTAGENESIS</scope>
</reference>
<evidence type="ECO:0000255" key="1">
    <source>
        <dbReference type="PROSITE-ProRule" id="PRU10017"/>
    </source>
</evidence>
<evidence type="ECO:0000269" key="2">
    <source>
    </source>
</evidence>
<evidence type="ECO:0000269" key="3">
    <source>
    </source>
</evidence>
<evidence type="ECO:0000269" key="4">
    <source>
    </source>
</evidence>
<evidence type="ECO:0000305" key="5"/>
<feature type="chain" id="PRO_0000139374" description="Methylated-DNA--protein-cysteine methyltransferase, inducible">
    <location>
        <begin position="1"/>
        <end position="179"/>
    </location>
</feature>
<feature type="active site" description="Nucleophile; methyl group acceptor">
    <location>
        <position position="141"/>
    </location>
</feature>
<feature type="mutagenesis site" description="Loss of activity." evidence="2">
    <original>C</original>
    <variation>Y</variation>
    <location>
        <position position="141"/>
    </location>
</feature>
<feature type="mutagenesis site" description="Loss of activity." evidence="2">
    <original>L</original>
    <variation>P</variation>
    <location>
        <position position="167"/>
    </location>
</feature>
<dbReference type="EC" id="2.1.1.63" evidence="4"/>
<dbReference type="EMBL" id="X53399">
    <property type="protein sequence ID" value="CAA37476.1"/>
    <property type="molecule type" value="Genomic_DNA"/>
</dbReference>
<dbReference type="EMBL" id="AB006424">
    <property type="protein sequence ID" value="BAA33075.1"/>
    <property type="molecule type" value="Genomic_DNA"/>
</dbReference>
<dbReference type="EMBL" id="AL009126">
    <property type="protein sequence ID" value="CAB11958.1"/>
    <property type="molecule type" value="Genomic_DNA"/>
</dbReference>
<dbReference type="PIR" id="S11564">
    <property type="entry name" value="XUBSMB"/>
</dbReference>
<dbReference type="RefSeq" id="NP_388063.1">
    <property type="nucleotide sequence ID" value="NC_000964.3"/>
</dbReference>
<dbReference type="RefSeq" id="WP_003246311.1">
    <property type="nucleotide sequence ID" value="NZ_OZ025638.1"/>
</dbReference>
<dbReference type="SMR" id="P19220"/>
<dbReference type="FunCoup" id="P19220">
    <property type="interactions" value="44"/>
</dbReference>
<dbReference type="STRING" id="224308.BSU01820"/>
<dbReference type="PaxDb" id="224308-BSU01820"/>
<dbReference type="EnsemblBacteria" id="CAB11958">
    <property type="protein sequence ID" value="CAB11958"/>
    <property type="gene ID" value="BSU_01820"/>
</dbReference>
<dbReference type="GeneID" id="938673"/>
<dbReference type="KEGG" id="bsu:BSU01820"/>
<dbReference type="PATRIC" id="fig|224308.179.peg.188"/>
<dbReference type="eggNOG" id="COG0350">
    <property type="taxonomic scope" value="Bacteria"/>
</dbReference>
<dbReference type="InParanoid" id="P19220"/>
<dbReference type="OrthoDB" id="9802228at2"/>
<dbReference type="PhylomeDB" id="P19220"/>
<dbReference type="BioCyc" id="BSUB:BSU01820-MONOMER"/>
<dbReference type="Proteomes" id="UP000001570">
    <property type="component" value="Chromosome"/>
</dbReference>
<dbReference type="GO" id="GO:0003908">
    <property type="term" value="F:methylated-DNA-[protein]-cysteine S-methyltransferase activity"/>
    <property type="evidence" value="ECO:0007669"/>
    <property type="project" value="UniProtKB-EC"/>
</dbReference>
<dbReference type="GO" id="GO:0006281">
    <property type="term" value="P:DNA repair"/>
    <property type="evidence" value="ECO:0007669"/>
    <property type="project" value="UniProtKB-KW"/>
</dbReference>
<dbReference type="GO" id="GO:0032259">
    <property type="term" value="P:methylation"/>
    <property type="evidence" value="ECO:0007669"/>
    <property type="project" value="UniProtKB-KW"/>
</dbReference>
<dbReference type="CDD" id="cd06445">
    <property type="entry name" value="ATase"/>
    <property type="match status" value="1"/>
</dbReference>
<dbReference type="FunFam" id="1.10.10.10:FF:000214">
    <property type="entry name" value="Methylated-DNA--protein-cysteine methyltransferase"/>
    <property type="match status" value="1"/>
</dbReference>
<dbReference type="Gene3D" id="3.30.160.70">
    <property type="entry name" value="Methylated DNA-protein cysteine methyltransferase domain"/>
    <property type="match status" value="1"/>
</dbReference>
<dbReference type="Gene3D" id="1.10.10.10">
    <property type="entry name" value="Winged helix-like DNA-binding domain superfamily/Winged helix DNA-binding domain"/>
    <property type="match status" value="1"/>
</dbReference>
<dbReference type="InterPro" id="IPR001497">
    <property type="entry name" value="MethylDNA_cys_MeTrfase_AS"/>
</dbReference>
<dbReference type="InterPro" id="IPR014048">
    <property type="entry name" value="MethylDNA_cys_MeTrfase_DNA-bd"/>
</dbReference>
<dbReference type="InterPro" id="IPR036217">
    <property type="entry name" value="MethylDNA_cys_MeTrfase_DNAb"/>
</dbReference>
<dbReference type="InterPro" id="IPR008332">
    <property type="entry name" value="MethylG_MeTrfase_N"/>
</dbReference>
<dbReference type="InterPro" id="IPR036631">
    <property type="entry name" value="MGMT_N_sf"/>
</dbReference>
<dbReference type="InterPro" id="IPR036388">
    <property type="entry name" value="WH-like_DNA-bd_sf"/>
</dbReference>
<dbReference type="NCBIfam" id="TIGR00589">
    <property type="entry name" value="ogt"/>
    <property type="match status" value="1"/>
</dbReference>
<dbReference type="PANTHER" id="PTHR10815">
    <property type="entry name" value="METHYLATED-DNA--PROTEIN-CYSTEINE METHYLTRANSFERASE"/>
    <property type="match status" value="1"/>
</dbReference>
<dbReference type="PANTHER" id="PTHR10815:SF12">
    <property type="entry name" value="METHYLATED-DNA--PROTEIN-CYSTEINE METHYLTRANSFERASE, INDUCIBLE"/>
    <property type="match status" value="1"/>
</dbReference>
<dbReference type="Pfam" id="PF01035">
    <property type="entry name" value="DNA_binding_1"/>
    <property type="match status" value="1"/>
</dbReference>
<dbReference type="Pfam" id="PF02870">
    <property type="entry name" value="Methyltransf_1N"/>
    <property type="match status" value="1"/>
</dbReference>
<dbReference type="SUPFAM" id="SSF53155">
    <property type="entry name" value="Methylated DNA-protein cysteine methyltransferase domain"/>
    <property type="match status" value="1"/>
</dbReference>
<dbReference type="SUPFAM" id="SSF46767">
    <property type="entry name" value="Methylated DNA-protein cysteine methyltransferase, C-terminal domain"/>
    <property type="match status" value="1"/>
</dbReference>
<dbReference type="PROSITE" id="PS00374">
    <property type="entry name" value="MGMT"/>
    <property type="match status" value="1"/>
</dbReference>
<proteinExistence type="evidence at protein level"/>
<organism>
    <name type="scientific">Bacillus subtilis (strain 168)</name>
    <dbReference type="NCBI Taxonomy" id="224308"/>
    <lineage>
        <taxon>Bacteria</taxon>
        <taxon>Bacillati</taxon>
        <taxon>Bacillota</taxon>
        <taxon>Bacilli</taxon>
        <taxon>Bacillales</taxon>
        <taxon>Bacillaceae</taxon>
        <taxon>Bacillus</taxon>
    </lineage>
</organism>
<comment type="function">
    <text evidence="3 4">Involved in the cellular defense against the biological effects of O6-methylguanine (O6-MeG) and O4-methylthymine (O4-MeT) in DNA. Repairs the methylated nucleobase in DNA by stoichiometrically transferring the methyl group to a cysteine residue in the enzyme. This is a suicide reaction: the enzyme is irreversibly inactivated.</text>
</comment>
<comment type="catalytic activity">
    <reaction evidence="1 4">
        <text>a 6-O-methyl-2'-deoxyguanosine in DNA + L-cysteinyl-[protein] = S-methyl-L-cysteinyl-[protein] + a 2'-deoxyguanosine in DNA</text>
        <dbReference type="Rhea" id="RHEA:24000"/>
        <dbReference type="Rhea" id="RHEA-COMP:10131"/>
        <dbReference type="Rhea" id="RHEA-COMP:10132"/>
        <dbReference type="Rhea" id="RHEA-COMP:11367"/>
        <dbReference type="Rhea" id="RHEA-COMP:11368"/>
        <dbReference type="ChEBI" id="CHEBI:29950"/>
        <dbReference type="ChEBI" id="CHEBI:82612"/>
        <dbReference type="ChEBI" id="CHEBI:85445"/>
        <dbReference type="ChEBI" id="CHEBI:85448"/>
        <dbReference type="EC" id="2.1.1.63"/>
    </reaction>
</comment>
<comment type="catalytic activity">
    <reaction evidence="1 4">
        <text>a 4-O-methyl-thymidine in DNA + L-cysteinyl-[protein] = a thymidine in DNA + S-methyl-L-cysteinyl-[protein]</text>
        <dbReference type="Rhea" id="RHEA:53428"/>
        <dbReference type="Rhea" id="RHEA-COMP:10131"/>
        <dbReference type="Rhea" id="RHEA-COMP:10132"/>
        <dbReference type="Rhea" id="RHEA-COMP:13555"/>
        <dbReference type="Rhea" id="RHEA-COMP:13556"/>
        <dbReference type="ChEBI" id="CHEBI:29950"/>
        <dbReference type="ChEBI" id="CHEBI:82612"/>
        <dbReference type="ChEBI" id="CHEBI:137386"/>
        <dbReference type="ChEBI" id="CHEBI:137387"/>
        <dbReference type="EC" id="2.1.1.63"/>
    </reaction>
</comment>
<comment type="induction">
    <text evidence="3">Up-regulated by methylated AdaA in response to the exposure to alkylating agents such as MNNG.</text>
</comment>
<comment type="miscellaneous">
    <text>This enzyme catalyzes only one turnover and therefore is not strictly catalytic. According to one definition, an enzyme is a biocatalyst that acts repeatedly and over many reaction cycles.</text>
</comment>
<comment type="similarity">
    <text evidence="5">Belongs to the MGMT family.</text>
</comment>
<protein>
    <recommendedName>
        <fullName>Methylated-DNA--protein-cysteine methyltransferase, inducible</fullName>
        <ecNumber evidence="4">2.1.1.63</ecNumber>
    </recommendedName>
    <alternativeName>
        <fullName>O-6-methylguanine-DNA alkyltransferase</fullName>
    </alternativeName>
    <alternativeName>
        <fullName>O6-methylguanine-DNA methyltransferase</fullName>
        <shortName>MGMT</shortName>
    </alternativeName>
</protein>